<organism>
    <name type="scientific">Arabidopsis thaliana</name>
    <name type="common">Mouse-ear cress</name>
    <dbReference type="NCBI Taxonomy" id="3702"/>
    <lineage>
        <taxon>Eukaryota</taxon>
        <taxon>Viridiplantae</taxon>
        <taxon>Streptophyta</taxon>
        <taxon>Embryophyta</taxon>
        <taxon>Tracheophyta</taxon>
        <taxon>Spermatophyta</taxon>
        <taxon>Magnoliopsida</taxon>
        <taxon>eudicotyledons</taxon>
        <taxon>Gunneridae</taxon>
        <taxon>Pentapetalae</taxon>
        <taxon>rosids</taxon>
        <taxon>malvids</taxon>
        <taxon>Brassicales</taxon>
        <taxon>Brassicaceae</taxon>
        <taxon>Camelineae</taxon>
        <taxon>Arabidopsis</taxon>
    </lineage>
</organism>
<sequence>MVSINSGPISSFVSRYSMIDSDTLLHLSSFGSTFNPNYKAKACIRFARKVCGSTVLGFLEVKPRKKSCCSRCNGVSRMCNKRNLGWDSEGSKDLETEILEFMKNSEKPGMFPSKKDLIRSGRFDLVERIVNQGGWLSMGWDLDEQEEKVRVNENVTPQDLHIEKQLPNCNSPEMDKTLNHGDLDLSSNLSSSTEQVESRNDSGIEGILTRLEKERNLSLGISVRENGKSNGAMHDISPNGSVPWSSRIVTASEIQEVDGSRGSGEYAQSRYQGAKSVSGKPGLSDSPTSETWRTWSMRRAGFTDEDFEAAEISSSGLTGVKKDDTKKDSGDSMNGKDRIASSSEDVNKTHIKHRLQQLQSELSSVLHSLRSPPDKVVTSKDSETTAGNLENLSDDWEYKENEIIHAQNKLRSTRAKLAVLEGKMAMAIIDAQRIVREKQRRIDHASRALRLLRTASIVWPNSASEVLLTGSFDGWSTQRKMKKAENGVFSLSLKLYPGKYEIKFIVDGQWKVDPLRPIVTSGGYENNLLIIS</sequence>
<evidence type="ECO:0000255" key="1"/>
<evidence type="ECO:0000256" key="2">
    <source>
        <dbReference type="SAM" id="MobiDB-lite"/>
    </source>
</evidence>
<evidence type="ECO:0000269" key="3">
    <source>
    </source>
</evidence>
<evidence type="ECO:0000269" key="4">
    <source>
    </source>
</evidence>
<evidence type="ECO:0000303" key="5">
    <source>
    </source>
</evidence>
<evidence type="ECO:0000303" key="6">
    <source>
    </source>
</evidence>
<evidence type="ECO:0000305" key="7"/>
<evidence type="ECO:0000305" key="8">
    <source>
    </source>
</evidence>
<evidence type="ECO:0000305" key="9">
    <source>
    </source>
</evidence>
<evidence type="ECO:0000312" key="10">
    <source>
        <dbReference type="Araport" id="AT1G27070"/>
    </source>
</evidence>
<evidence type="ECO:0000312" key="11">
    <source>
        <dbReference type="EMBL" id="AAF79876.1"/>
    </source>
</evidence>
<protein>
    <recommendedName>
        <fullName evidence="7">Protein PTST homolog 2, chloroplastic</fullName>
    </recommendedName>
    <alternativeName>
        <fullName evidence="5">PROTEIN TARGETING TO STARCH homolog 2</fullName>
    </alternativeName>
</protein>
<keyword id="KW-0150">Chloroplast</keyword>
<keyword id="KW-0175">Coiled coil</keyword>
<keyword id="KW-0472">Membrane</keyword>
<keyword id="KW-0934">Plastid</keyword>
<keyword id="KW-1185">Reference proteome</keyword>
<keyword id="KW-0750">Starch biosynthesis</keyword>
<keyword id="KW-0793">Thylakoid</keyword>
<keyword id="KW-0809">Transit peptide</keyword>
<dbReference type="EMBL" id="AC000348">
    <property type="protein sequence ID" value="AAF79876.1"/>
    <property type="molecule type" value="Genomic_DNA"/>
</dbReference>
<dbReference type="EMBL" id="CP002684">
    <property type="protein sequence ID" value="AEE30776.1"/>
    <property type="molecule type" value="Genomic_DNA"/>
</dbReference>
<dbReference type="EMBL" id="AY102120">
    <property type="protein sequence ID" value="AAM26688.1"/>
    <property type="status" value="ALT_FRAME"/>
    <property type="molecule type" value="mRNA"/>
</dbReference>
<dbReference type="EMBL" id="BT000569">
    <property type="protein sequence ID" value="AAN18138.1"/>
    <property type="molecule type" value="mRNA"/>
</dbReference>
<dbReference type="RefSeq" id="NP_174027.3">
    <property type="nucleotide sequence ID" value="NM_102469.5"/>
</dbReference>
<dbReference type="SMR" id="Q9LFY0"/>
<dbReference type="FunCoup" id="Q9LFY0">
    <property type="interactions" value="1757"/>
</dbReference>
<dbReference type="STRING" id="3702.Q9LFY0"/>
<dbReference type="iPTMnet" id="Q9LFY0"/>
<dbReference type="PaxDb" id="3702-AT1G27070.1"/>
<dbReference type="ProteomicsDB" id="226454"/>
<dbReference type="EnsemblPlants" id="AT1G27070.1">
    <property type="protein sequence ID" value="AT1G27070.1"/>
    <property type="gene ID" value="AT1G27070"/>
</dbReference>
<dbReference type="GeneID" id="839596"/>
<dbReference type="Gramene" id="AT1G27070.1">
    <property type="protein sequence ID" value="AT1G27070.1"/>
    <property type="gene ID" value="AT1G27070"/>
</dbReference>
<dbReference type="KEGG" id="ath:AT1G27070"/>
<dbReference type="Araport" id="AT1G27070"/>
<dbReference type="TAIR" id="AT1G27070">
    <property type="gene designation" value="PTST2"/>
</dbReference>
<dbReference type="eggNOG" id="KOG1616">
    <property type="taxonomic scope" value="Eukaryota"/>
</dbReference>
<dbReference type="HOGENOM" id="CLU_020708_1_1_1"/>
<dbReference type="InParanoid" id="Q9LFY0"/>
<dbReference type="OMA" id="RRCKDWD"/>
<dbReference type="PhylomeDB" id="Q9LFY0"/>
<dbReference type="PRO" id="PR:Q9LFY0"/>
<dbReference type="Proteomes" id="UP000006548">
    <property type="component" value="Chromosome 1"/>
</dbReference>
<dbReference type="ExpressionAtlas" id="Q9LFY0">
    <property type="expression patterns" value="baseline and differential"/>
</dbReference>
<dbReference type="GO" id="GO:0009507">
    <property type="term" value="C:chloroplast"/>
    <property type="evidence" value="ECO:0000314"/>
    <property type="project" value="UniProtKB"/>
</dbReference>
<dbReference type="GO" id="GO:0009535">
    <property type="term" value="C:chloroplast thylakoid membrane"/>
    <property type="evidence" value="ECO:0007669"/>
    <property type="project" value="UniProtKB-SubCell"/>
</dbReference>
<dbReference type="GO" id="GO:2001071">
    <property type="term" value="F:maltoheptaose binding"/>
    <property type="evidence" value="ECO:0000314"/>
    <property type="project" value="UniProtKB"/>
</dbReference>
<dbReference type="GO" id="GO:0030247">
    <property type="term" value="F:polysaccharide binding"/>
    <property type="evidence" value="ECO:0000314"/>
    <property type="project" value="TAIR"/>
</dbReference>
<dbReference type="GO" id="GO:0010581">
    <property type="term" value="P:regulation of starch biosynthetic process"/>
    <property type="evidence" value="ECO:0000315"/>
    <property type="project" value="TAIR"/>
</dbReference>
<dbReference type="GO" id="GO:0019252">
    <property type="term" value="P:starch biosynthetic process"/>
    <property type="evidence" value="ECO:0000315"/>
    <property type="project" value="UniProtKB"/>
</dbReference>
<dbReference type="CDD" id="cd02859">
    <property type="entry name" value="E_set_AMPKbeta_like_N"/>
    <property type="match status" value="1"/>
</dbReference>
<dbReference type="FunFam" id="2.60.40.10:FF:001513">
    <property type="entry name" value="Protein PTST, chloroplastic"/>
    <property type="match status" value="1"/>
</dbReference>
<dbReference type="Gene3D" id="2.60.40.10">
    <property type="entry name" value="Immunoglobulins"/>
    <property type="match status" value="1"/>
</dbReference>
<dbReference type="InterPro" id="IPR032640">
    <property type="entry name" value="AMPK1_CBM"/>
</dbReference>
<dbReference type="InterPro" id="IPR013783">
    <property type="entry name" value="Ig-like_fold"/>
</dbReference>
<dbReference type="InterPro" id="IPR014756">
    <property type="entry name" value="Ig_E-set"/>
</dbReference>
<dbReference type="PANTHER" id="PTHR47434:SF1">
    <property type="entry name" value="PROTEIN PTST HOMOLOG 2, CHLOROPLASTIC"/>
    <property type="match status" value="1"/>
</dbReference>
<dbReference type="PANTHER" id="PTHR47434">
    <property type="entry name" value="PROTEIN PTST HOMOLOG 3, CHLOROPLASTIC"/>
    <property type="match status" value="1"/>
</dbReference>
<dbReference type="Pfam" id="PF16561">
    <property type="entry name" value="AMPK1_CBM"/>
    <property type="match status" value="1"/>
</dbReference>
<dbReference type="SUPFAM" id="SSF81296">
    <property type="entry name" value="E set domains"/>
    <property type="match status" value="1"/>
</dbReference>
<comment type="function">
    <text evidence="3 4">Involved in starch granule initiation in leaf chloroplasts (PubMed:28684429, PubMed:29866647). Binds and delivers suitable maltooligosaccharide substrates to starch synthase 4 (SS4) (PubMed:28684429).</text>
</comment>
<comment type="subunit">
    <text evidence="3 4">Interacts with PTST3 and SS4 (PubMed:28684429). Interacts with MFP1; the interaction is essential for the initiation of starch granules biosynthesis in leaf chloroplasts, for the correct location of the process in the stromal spaces between the thylakoid membranes, and for the association of this protein with the thylakoid membranes (PubMed:29866647). Interacts with PII1/MRC; the interaction is essential for the initiation of starch granules biosynthesis in leaf chloroplasts (PubMed:29866647).</text>
</comment>
<comment type="subcellular location">
    <subcellularLocation>
        <location evidence="3 4">Plastid</location>
        <location evidence="3 4">Chloroplast</location>
    </subcellularLocation>
    <subcellularLocation>
        <location evidence="4">Plastid</location>
        <location evidence="4">Chloroplast thylakoid membrane</location>
        <topology evidence="9">Peripheral membrane protein</topology>
        <orientation evidence="4">Stromal side</orientation>
    </subcellularLocation>
    <text evidence="4">Colocalizes with MFP1 to small patches distributed throughout the chloroplasts.</text>
</comment>
<comment type="domain">
    <text evidence="8">Contains a C-terminal (456-532) carbohydrate-binding domain (CBM).</text>
</comment>
<comment type="disruption phenotype">
    <text evidence="3 4">No visible phenotype under normal growth conditions (PubMed:28684429). Leaf chloroplasts exhibit reduced number of starch granules (PubMed:28684429, PubMed:29866647). Larger chloroplast starch granules than wild-type (PubMed:29866647).</text>
</comment>
<comment type="sequence caution" evidence="7">
    <conflict type="frameshift">
        <sequence resource="EMBL-CDS" id="AAM26688"/>
    </conflict>
</comment>
<feature type="transit peptide" description="Chloroplast" evidence="1">
    <location>
        <begin position="1"/>
        <end position="71"/>
    </location>
</feature>
<feature type="chain" id="PRO_0000442180" description="Protein PTST homolog 2, chloroplastic">
    <location>
        <begin position="72"/>
        <end position="532"/>
    </location>
</feature>
<feature type="region of interest" description="Disordered" evidence="2">
    <location>
        <begin position="165"/>
        <end position="201"/>
    </location>
</feature>
<feature type="region of interest" description="Disordered" evidence="2">
    <location>
        <begin position="256"/>
        <end position="292"/>
    </location>
</feature>
<feature type="region of interest" description="Disordered" evidence="2">
    <location>
        <begin position="314"/>
        <end position="347"/>
    </location>
</feature>
<feature type="region of interest" description="Disordered" evidence="2">
    <location>
        <begin position="367"/>
        <end position="388"/>
    </location>
</feature>
<feature type="coiled-coil region" evidence="1">
    <location>
        <begin position="389"/>
        <end position="454"/>
    </location>
</feature>
<feature type="compositionally biased region" description="Basic and acidic residues" evidence="2">
    <location>
        <begin position="173"/>
        <end position="183"/>
    </location>
</feature>
<feature type="compositionally biased region" description="Basic and acidic residues" evidence="2">
    <location>
        <begin position="320"/>
        <end position="339"/>
    </location>
</feature>
<feature type="mutagenesis site" description="Loss of glucan-binding in vitro." evidence="4">
    <original>W</original>
    <variation>A</variation>
    <location>
        <position position="475"/>
    </location>
</feature>
<gene>
    <name evidence="5 6" type="primary">PTST2</name>
    <name evidence="6 10" type="ordered locus">At1g27070</name>
    <name evidence="11" type="ORF">T7N9.13</name>
</gene>
<accession>Q9LFY0</accession>
<accession>Q8LPF2</accession>
<proteinExistence type="evidence at protein level"/>
<name>PTST2_ARATH</name>
<reference key="1">
    <citation type="journal article" date="2000" name="Nature">
        <title>Sequence and analysis of chromosome 1 of the plant Arabidopsis thaliana.</title>
        <authorList>
            <person name="Theologis A."/>
            <person name="Ecker J.R."/>
            <person name="Palm C.J."/>
            <person name="Federspiel N.A."/>
            <person name="Kaul S."/>
            <person name="White O."/>
            <person name="Alonso J."/>
            <person name="Altafi H."/>
            <person name="Araujo R."/>
            <person name="Bowman C.L."/>
            <person name="Brooks S.Y."/>
            <person name="Buehler E."/>
            <person name="Chan A."/>
            <person name="Chao Q."/>
            <person name="Chen H."/>
            <person name="Cheuk R.F."/>
            <person name="Chin C.W."/>
            <person name="Chung M.K."/>
            <person name="Conn L."/>
            <person name="Conway A.B."/>
            <person name="Conway A.R."/>
            <person name="Creasy T.H."/>
            <person name="Dewar K."/>
            <person name="Dunn P."/>
            <person name="Etgu P."/>
            <person name="Feldblyum T.V."/>
            <person name="Feng J.-D."/>
            <person name="Fong B."/>
            <person name="Fujii C.Y."/>
            <person name="Gill J.E."/>
            <person name="Goldsmith A.D."/>
            <person name="Haas B."/>
            <person name="Hansen N.F."/>
            <person name="Hughes B."/>
            <person name="Huizar L."/>
            <person name="Hunter J.L."/>
            <person name="Jenkins J."/>
            <person name="Johnson-Hopson C."/>
            <person name="Khan S."/>
            <person name="Khaykin E."/>
            <person name="Kim C.J."/>
            <person name="Koo H.L."/>
            <person name="Kremenetskaia I."/>
            <person name="Kurtz D.B."/>
            <person name="Kwan A."/>
            <person name="Lam B."/>
            <person name="Langin-Hooper S."/>
            <person name="Lee A."/>
            <person name="Lee J.M."/>
            <person name="Lenz C.A."/>
            <person name="Li J.H."/>
            <person name="Li Y.-P."/>
            <person name="Lin X."/>
            <person name="Liu S.X."/>
            <person name="Liu Z.A."/>
            <person name="Luros J.S."/>
            <person name="Maiti R."/>
            <person name="Marziali A."/>
            <person name="Militscher J."/>
            <person name="Miranda M."/>
            <person name="Nguyen M."/>
            <person name="Nierman W.C."/>
            <person name="Osborne B.I."/>
            <person name="Pai G."/>
            <person name="Peterson J."/>
            <person name="Pham P.K."/>
            <person name="Rizzo M."/>
            <person name="Rooney T."/>
            <person name="Rowley D."/>
            <person name="Sakano H."/>
            <person name="Salzberg S.L."/>
            <person name="Schwartz J.R."/>
            <person name="Shinn P."/>
            <person name="Southwick A.M."/>
            <person name="Sun H."/>
            <person name="Tallon L.J."/>
            <person name="Tambunga G."/>
            <person name="Toriumi M.J."/>
            <person name="Town C.D."/>
            <person name="Utterback T."/>
            <person name="Van Aken S."/>
            <person name="Vaysberg M."/>
            <person name="Vysotskaia V.S."/>
            <person name="Walker M."/>
            <person name="Wu D."/>
            <person name="Yu G."/>
            <person name="Fraser C.M."/>
            <person name="Venter J.C."/>
            <person name="Davis R.W."/>
        </authorList>
    </citation>
    <scope>NUCLEOTIDE SEQUENCE [LARGE SCALE GENOMIC DNA]</scope>
    <source>
        <strain>cv. Columbia</strain>
    </source>
</reference>
<reference key="2">
    <citation type="journal article" date="2017" name="Plant J.">
        <title>Araport11: a complete reannotation of the Arabidopsis thaliana reference genome.</title>
        <authorList>
            <person name="Cheng C.Y."/>
            <person name="Krishnakumar V."/>
            <person name="Chan A.P."/>
            <person name="Thibaud-Nissen F."/>
            <person name="Schobel S."/>
            <person name="Town C.D."/>
        </authorList>
    </citation>
    <scope>GENOME REANNOTATION</scope>
    <source>
        <strain>cv. Columbia</strain>
    </source>
</reference>
<reference key="3">
    <citation type="journal article" date="2003" name="Science">
        <title>Empirical analysis of transcriptional activity in the Arabidopsis genome.</title>
        <authorList>
            <person name="Yamada K."/>
            <person name="Lim J."/>
            <person name="Dale J.M."/>
            <person name="Chen H."/>
            <person name="Shinn P."/>
            <person name="Palm C.J."/>
            <person name="Southwick A.M."/>
            <person name="Wu H.C."/>
            <person name="Kim C.J."/>
            <person name="Nguyen M."/>
            <person name="Pham P.K."/>
            <person name="Cheuk R.F."/>
            <person name="Karlin-Newmann G."/>
            <person name="Liu S.X."/>
            <person name="Lam B."/>
            <person name="Sakano H."/>
            <person name="Wu T."/>
            <person name="Yu G."/>
            <person name="Miranda M."/>
            <person name="Quach H.L."/>
            <person name="Tripp M."/>
            <person name="Chang C.H."/>
            <person name="Lee J.M."/>
            <person name="Toriumi M.J."/>
            <person name="Chan M.M."/>
            <person name="Tang C.C."/>
            <person name="Onodera C.S."/>
            <person name="Deng J.M."/>
            <person name="Akiyama K."/>
            <person name="Ansari Y."/>
            <person name="Arakawa T."/>
            <person name="Banh J."/>
            <person name="Banno F."/>
            <person name="Bowser L."/>
            <person name="Brooks S.Y."/>
            <person name="Carninci P."/>
            <person name="Chao Q."/>
            <person name="Choy N."/>
            <person name="Enju A."/>
            <person name="Goldsmith A.D."/>
            <person name="Gurjal M."/>
            <person name="Hansen N.F."/>
            <person name="Hayashizaki Y."/>
            <person name="Johnson-Hopson C."/>
            <person name="Hsuan V.W."/>
            <person name="Iida K."/>
            <person name="Karnes M."/>
            <person name="Khan S."/>
            <person name="Koesema E."/>
            <person name="Ishida J."/>
            <person name="Jiang P.X."/>
            <person name="Jones T."/>
            <person name="Kawai J."/>
            <person name="Kamiya A."/>
            <person name="Meyers C."/>
            <person name="Nakajima M."/>
            <person name="Narusaka M."/>
            <person name="Seki M."/>
            <person name="Sakurai T."/>
            <person name="Satou M."/>
            <person name="Tamse R."/>
            <person name="Vaysberg M."/>
            <person name="Wallender E.K."/>
            <person name="Wong C."/>
            <person name="Yamamura Y."/>
            <person name="Yuan S."/>
            <person name="Shinozaki K."/>
            <person name="Davis R.W."/>
            <person name="Theologis A."/>
            <person name="Ecker J.R."/>
        </authorList>
    </citation>
    <scope>NUCLEOTIDE SEQUENCE [LARGE SCALE MRNA]</scope>
    <source>
        <strain>cv. Columbia</strain>
    </source>
</reference>
<reference key="4">
    <citation type="journal article" date="2017" name="Plant Cell">
        <title>Homologs of PROTEIN TARGETING TO STARCH control starch granule initiation in Arabidopsis Leaves.</title>
        <authorList>
            <person name="Seung D."/>
            <person name="Boudet J."/>
            <person name="Monroe J."/>
            <person name="Schreier T.B."/>
            <person name="David L.C."/>
            <person name="Abt M."/>
            <person name="Lu K.J."/>
            <person name="Zanella M."/>
            <person name="Zeeman S.C."/>
        </authorList>
    </citation>
    <scope>FUNCTION</scope>
    <scope>INTERACTION WITH PTST3 AND SS4</scope>
    <scope>SUBCELLULAR LOCATION</scope>
    <scope>DISRUPTION PHENOTYPE</scope>
</reference>
<reference key="5">
    <citation type="journal article" date="2018" name="Plant Cell">
        <title>Two Plastidial Coiled-Coil Proteins Are Essential for Normal Starch Granule Initiation in Arabidopsis.</title>
        <authorList>
            <person name="Seung D."/>
            <person name="Schreier T.B."/>
            <person name="Buergy L."/>
            <person name="Eicke S."/>
            <person name="Zeeman S.C."/>
        </authorList>
    </citation>
    <scope>FUNCTION</scope>
    <scope>INTERACTION WITH MFP1 AND PII1/MRC</scope>
    <scope>SUBCELLULAR LOCATION</scope>
    <scope>DISRUPTION PHENOTYPE</scope>
    <scope>MUTAGENESIS OF TRP-475</scope>
</reference>